<gene>
    <name type="primary">HMGB1</name>
    <name type="synonym">HMGA</name>
    <name type="synonym">HMGALPHA</name>
    <name type="synonym">NFD01</name>
    <name type="synonym">NFD1</name>
    <name type="synonym">ORF13</name>
    <name type="ordered locus">At3g51880</name>
    <name type="ORF">ATEM1.13</name>
</gene>
<keyword id="KW-0025">Alternative splicing</keyword>
<keyword id="KW-0238">DNA-binding</keyword>
<keyword id="KW-0539">Nucleus</keyword>
<keyword id="KW-0597">Phosphoprotein</keyword>
<keyword id="KW-1185">Reference proteome</keyword>
<accession>O49595</accession>
<accession>Q3EAL6</accession>
<feature type="chain" id="PRO_0000399927" description="High mobility group B protein 1">
    <location>
        <begin position="1"/>
        <end position="178"/>
    </location>
</feature>
<feature type="DNA-binding region" description="HMG box" evidence="1">
    <location>
        <begin position="53"/>
        <end position="122"/>
    </location>
</feature>
<feature type="region of interest" description="Disordered" evidence="2">
    <location>
        <begin position="1"/>
        <end position="59"/>
    </location>
</feature>
<feature type="region of interest" description="Disordered" evidence="2">
    <location>
        <begin position="75"/>
        <end position="178"/>
    </location>
</feature>
<feature type="compositionally biased region" description="Basic and acidic residues" evidence="2">
    <location>
        <begin position="1"/>
        <end position="52"/>
    </location>
</feature>
<feature type="compositionally biased region" description="Basic and acidic residues" evidence="2">
    <location>
        <begin position="101"/>
        <end position="118"/>
    </location>
</feature>
<feature type="compositionally biased region" description="Acidic residues" evidence="2">
    <location>
        <begin position="140"/>
        <end position="178"/>
    </location>
</feature>
<feature type="modified residue" description="Phosphoserine" evidence="12">
    <location>
        <position position="137"/>
    </location>
</feature>
<feature type="modified residue" description="Phosphoserine" evidence="10 11 12">
    <location>
        <position position="146"/>
    </location>
</feature>
<feature type="splice variant" id="VSP_039939" description="In isoform 2." evidence="8">
    <original>E</original>
    <variation>EVTIPLSN</variation>
    <location>
        <position position="148"/>
    </location>
</feature>
<protein>
    <recommendedName>
        <fullName>High mobility group B protein 1</fullName>
    </recommendedName>
    <alternativeName>
        <fullName>High mobility group protein A</fullName>
        <shortName>AtHMGalpha</shortName>
        <shortName>HMG alpha</shortName>
    </alternativeName>
    <alternativeName>
        <fullName>Nucleosome/chromatin assembly factor group D 01</fullName>
        <shortName>Nucleosome/chromatin assembly factor group D 1</shortName>
    </alternativeName>
</protein>
<organism>
    <name type="scientific">Arabidopsis thaliana</name>
    <name type="common">Mouse-ear cress</name>
    <dbReference type="NCBI Taxonomy" id="3702"/>
    <lineage>
        <taxon>Eukaryota</taxon>
        <taxon>Viridiplantae</taxon>
        <taxon>Streptophyta</taxon>
        <taxon>Embryophyta</taxon>
        <taxon>Tracheophyta</taxon>
        <taxon>Spermatophyta</taxon>
        <taxon>Magnoliopsida</taxon>
        <taxon>eudicotyledons</taxon>
        <taxon>Gunneridae</taxon>
        <taxon>Pentapetalae</taxon>
        <taxon>rosids</taxon>
        <taxon>malvids</taxon>
        <taxon>Brassicales</taxon>
        <taxon>Brassicaceae</taxon>
        <taxon>Camelineae</taxon>
        <taxon>Arabidopsis</taxon>
    </lineage>
</organism>
<sequence>MKTAKGKDKVKTTKEALKPVDDRKVGKRKAPAEKPTKRETRKEKKAKKDPNKPKRAPSAFFVFLEDFRVTFKKENPNVKAVSAVGKAGGQKWKSMSQAEKAPYEEKAAKRKAEYEKQMDAYNKNLEEGSDESEKSRSEINDEDEASGEEELLEKEAAGDDEEEEEEEDDDDDDDEEED</sequence>
<name>HMGB1_ARATH</name>
<reference key="1">
    <citation type="journal article" date="1997" name="Eur. J. Biochem.">
        <title>Variability in Arabidopsis thaliana chromosomal high-mobility-group-1-like proteins.</title>
        <authorList>
            <person name="Stemmer C."/>
            <person name="Ritt C."/>
            <person name="Igloi G.L."/>
            <person name="Grimm R."/>
            <person name="Grasser K.D."/>
        </authorList>
    </citation>
    <scope>NUCLEOTIDE SEQUENCE [MRNA] (ISOFORM 1)</scope>
    <scope>FUNCTION</scope>
    <scope>TISSUE SPECIFICITY</scope>
    <source>
        <tissue>Leaf</tissue>
    </source>
</reference>
<reference key="2">
    <citation type="journal article" date="1999" name="Plant Mol. Biol.">
        <title>Fine sequence analysis of 60 kb around the Arabidopsis thaliana AtEm1 locus on chromosome III.</title>
        <authorList>
            <person name="Comella P."/>
            <person name="Wu H.-J."/>
            <person name="Laudie M."/>
            <person name="Berger C."/>
            <person name="Cooke R."/>
            <person name="Delseny M."/>
            <person name="Grellet F."/>
        </authorList>
    </citation>
    <scope>NUCLEOTIDE SEQUENCE [LARGE SCALE GENOMIC DNA]</scope>
    <source>
        <strain>cv. Columbia</strain>
    </source>
</reference>
<reference key="3">
    <citation type="journal article" date="2017" name="Plant J.">
        <title>Araport11: a complete reannotation of the Arabidopsis thaliana reference genome.</title>
        <authorList>
            <person name="Cheng C.Y."/>
            <person name="Krishnakumar V."/>
            <person name="Chan A.P."/>
            <person name="Thibaud-Nissen F."/>
            <person name="Schobel S."/>
            <person name="Town C.D."/>
        </authorList>
    </citation>
    <scope>GENOME REANNOTATION</scope>
    <source>
        <strain>cv. Columbia</strain>
    </source>
</reference>
<reference key="4">
    <citation type="journal article" date="2003" name="Science">
        <title>Empirical analysis of transcriptional activity in the Arabidopsis genome.</title>
        <authorList>
            <person name="Yamada K."/>
            <person name="Lim J."/>
            <person name="Dale J.M."/>
            <person name="Chen H."/>
            <person name="Shinn P."/>
            <person name="Palm C.J."/>
            <person name="Southwick A.M."/>
            <person name="Wu H.C."/>
            <person name="Kim C.J."/>
            <person name="Nguyen M."/>
            <person name="Pham P.K."/>
            <person name="Cheuk R.F."/>
            <person name="Karlin-Newmann G."/>
            <person name="Liu S.X."/>
            <person name="Lam B."/>
            <person name="Sakano H."/>
            <person name="Wu T."/>
            <person name="Yu G."/>
            <person name="Miranda M."/>
            <person name="Quach H.L."/>
            <person name="Tripp M."/>
            <person name="Chang C.H."/>
            <person name="Lee J.M."/>
            <person name="Toriumi M.J."/>
            <person name="Chan M.M."/>
            <person name="Tang C.C."/>
            <person name="Onodera C.S."/>
            <person name="Deng J.M."/>
            <person name="Akiyama K."/>
            <person name="Ansari Y."/>
            <person name="Arakawa T."/>
            <person name="Banh J."/>
            <person name="Banno F."/>
            <person name="Bowser L."/>
            <person name="Brooks S.Y."/>
            <person name="Carninci P."/>
            <person name="Chao Q."/>
            <person name="Choy N."/>
            <person name="Enju A."/>
            <person name="Goldsmith A.D."/>
            <person name="Gurjal M."/>
            <person name="Hansen N.F."/>
            <person name="Hayashizaki Y."/>
            <person name="Johnson-Hopson C."/>
            <person name="Hsuan V.W."/>
            <person name="Iida K."/>
            <person name="Karnes M."/>
            <person name="Khan S."/>
            <person name="Koesema E."/>
            <person name="Ishida J."/>
            <person name="Jiang P.X."/>
            <person name="Jones T."/>
            <person name="Kawai J."/>
            <person name="Kamiya A."/>
            <person name="Meyers C."/>
            <person name="Nakajima M."/>
            <person name="Narusaka M."/>
            <person name="Seki M."/>
            <person name="Sakurai T."/>
            <person name="Satou M."/>
            <person name="Tamse R."/>
            <person name="Vaysberg M."/>
            <person name="Wallender E.K."/>
            <person name="Wong C."/>
            <person name="Yamamura Y."/>
            <person name="Yuan S."/>
            <person name="Shinozaki K."/>
            <person name="Davis R.W."/>
            <person name="Theologis A."/>
            <person name="Ecker J.R."/>
        </authorList>
    </citation>
    <scope>NUCLEOTIDE SEQUENCE [LARGE SCALE MRNA] (ISOFORM 1)</scope>
    <source>
        <strain>cv. Columbia</strain>
    </source>
</reference>
<reference key="5">
    <citation type="journal article" date="2009" name="DNA Res.">
        <title>Analysis of multiple occurrences of alternative splicing events in Arabidopsis thaliana using novel sequenced full-length cDNAs.</title>
        <authorList>
            <person name="Iida K."/>
            <person name="Fukami-Kobayashi K."/>
            <person name="Toyoda A."/>
            <person name="Sakaki Y."/>
            <person name="Kobayashi M."/>
            <person name="Seki M."/>
            <person name="Shinozaki K."/>
        </authorList>
    </citation>
    <scope>NUCLEOTIDE SEQUENCE [LARGE SCALE MRNA] (ISOFORM 2)</scope>
    <source>
        <strain>cv. Columbia</strain>
        <tissue>Rosette leaf</tissue>
    </source>
</reference>
<reference key="6">
    <citation type="journal article" date="2003" name="Biochemistry">
        <title>Phosphorylation of maize and Arabidopsis HMGB proteins by protein kinase CK2alpha.</title>
        <authorList>
            <person name="Stemmer C."/>
            <person name="Leeming D.J."/>
            <person name="Franssen L."/>
            <person name="Grimm R."/>
            <person name="Grasser K.D."/>
        </authorList>
    </citation>
    <scope>PHOSPHORYLATION</scope>
</reference>
<reference key="7">
    <citation type="journal article" date="2006" name="Plant Cell">
        <title>Arabidopsis chromatin-associated HMGA and HMGB use different nuclear targeting signals and display highly dynamic localization within the nucleus.</title>
        <authorList>
            <person name="Launholt D."/>
            <person name="Merkle T."/>
            <person name="Houben A."/>
            <person name="Schulz A."/>
            <person name="Grasser K.D."/>
        </authorList>
    </citation>
    <scope>SUBCELLULAR LOCATION</scope>
    <scope>FUNCTION</scope>
</reference>
<reference key="8">
    <citation type="journal article" date="2007" name="FEBS Lett.">
        <title>Overlapping expression patterns among the genes encoding Arabidopsis chromosomal high mobility group (HMG) proteins.</title>
        <authorList>
            <person name="Launholt D."/>
            <person name="Groenlund J.T."/>
            <person name="Nielsen H.K."/>
            <person name="Grasser K.D."/>
        </authorList>
    </citation>
    <scope>TISSUE SPECIFICITY</scope>
</reference>
<reference key="9">
    <citation type="journal article" date="2007" name="Plant Cell Physiol.">
        <title>Characterization of transgenic Arabidopsis plants overexpressing high mobility group B proteins under high salinity, drought or cold stress.</title>
        <authorList>
            <person name="Kwak K.J."/>
            <person name="Kim J.Y."/>
            <person name="Kim Y.O."/>
            <person name="Kang H."/>
        </authorList>
    </citation>
    <scope>TISSUE SPECIFICITY</scope>
    <scope>INDUCTION BY SALT</scope>
</reference>
<reference key="10">
    <citation type="journal article" date="2008" name="J. Mol. Biol.">
        <title>The expression level of the chromatin-associated HMGB1 protein influences growth, stress tolerance, and transcriptome in Arabidopsis.</title>
        <authorList>
            <person name="Lildballe D.L."/>
            <person name="Pedersen D.S."/>
            <person name="Kalamajka R."/>
            <person name="Emmersen J."/>
            <person name="Houben A."/>
            <person name="Grasser K.D."/>
        </authorList>
    </citation>
    <scope>SUBCELLULAR LOCATION</scope>
    <scope>DISRUPTION PHENOTYPE</scope>
</reference>
<reference key="11">
    <citation type="journal article" date="2008" name="J. Proteome Res.">
        <title>Site-specific phosphorylation profiling of Arabidopsis proteins by mass spectrometry and peptide chip analysis.</title>
        <authorList>
            <person name="de la Fuente van Bentem S."/>
            <person name="Anrather D."/>
            <person name="Dohnal I."/>
            <person name="Roitinger E."/>
            <person name="Csaszar E."/>
            <person name="Joore J."/>
            <person name="Buijnink J."/>
            <person name="Carreri A."/>
            <person name="Forzani C."/>
            <person name="Lorkovic Z.J."/>
            <person name="Barta A."/>
            <person name="Lecourieux D."/>
            <person name="Verhounig A."/>
            <person name="Jonak C."/>
            <person name="Hirt H."/>
        </authorList>
    </citation>
    <scope>PHOSPHORYLATION [LARGE SCALE ANALYSIS] AT SER-146</scope>
    <scope>IDENTIFICATION BY MASS SPECTROMETRY [LARGE SCALE ANALYSIS]</scope>
    <source>
        <tissue>Root</tissue>
    </source>
</reference>
<reference key="12">
    <citation type="journal article" date="2009" name="J. Proteomics">
        <title>Phosphoproteomic analysis of nuclei-enriched fractions from Arabidopsis thaliana.</title>
        <authorList>
            <person name="Jones A.M.E."/>
            <person name="MacLean D."/>
            <person name="Studholme D.J."/>
            <person name="Serna-Sanz A."/>
            <person name="Andreasson E."/>
            <person name="Rathjen J.P."/>
            <person name="Peck S.C."/>
        </authorList>
    </citation>
    <scope>PHOSPHORYLATION [LARGE SCALE ANALYSIS] AT SER-146</scope>
    <scope>IDENTIFICATION BY MASS SPECTROMETRY [LARGE SCALE ANALYSIS]</scope>
    <source>
        <strain>cv. Columbia</strain>
    </source>
</reference>
<reference key="13">
    <citation type="journal article" date="2009" name="Plant Physiol.">
        <title>Large-scale Arabidopsis phosphoproteome profiling reveals novel chloroplast kinase substrates and phosphorylation networks.</title>
        <authorList>
            <person name="Reiland S."/>
            <person name="Messerli G."/>
            <person name="Baerenfaller K."/>
            <person name="Gerrits B."/>
            <person name="Endler A."/>
            <person name="Grossmann J."/>
            <person name="Gruissem W."/>
            <person name="Baginsky S."/>
        </authorList>
    </citation>
    <scope>PHOSPHORYLATION [LARGE SCALE ANALYSIS] AT SER-137 AND SER-146</scope>
    <scope>IDENTIFICATION BY MASS SPECTROMETRY [LARGE SCALE ANALYSIS]</scope>
</reference>
<reference key="14">
    <citation type="journal article" date="2010" name="Biochim. Biophys. Acta">
        <title>The role of chromosomal HMGB proteins in plants.</title>
        <authorList>
            <person name="Pedersen D.S."/>
            <person name="Grasser K.D."/>
        </authorList>
    </citation>
    <scope>REVIEW</scope>
</reference>
<proteinExistence type="evidence at protein level"/>
<comment type="function">
    <text evidence="3 7">Binds preferentially double-stranded DNA. Modulates general plant growth and stress tolerance. Confers sensitivity to salt and genotoxic (methyl methanesulfonate, MMS) stresses.</text>
</comment>
<comment type="subcellular location">
    <subcellularLocation>
        <location evidence="1 3 6">Nucleus</location>
    </subcellularLocation>
    <text>Displays a highly dynamic speckle distribution pattern in interphase chromatin but does not associate with mitotic chromosomes.</text>
</comment>
<comment type="alternative products">
    <event type="alternative splicing"/>
    <isoform>
        <id>O49595-1</id>
        <name>1</name>
        <sequence type="displayed"/>
    </isoform>
    <isoform>
        <id>O49595-2</id>
        <name>2</name>
        <sequence type="described" ref="VSP_039939"/>
    </isoform>
</comment>
<comment type="tissue specificity">
    <text evidence="4 5 7">Expressed in cotyledons, roots, stems, leaves and flowers (excluding pedicels).</text>
</comment>
<comment type="induction">
    <text evidence="4">Down-regulated by salt stress.</text>
</comment>
<comment type="disruption phenotype">
    <text evidence="6">Slightly delayed and reduced germination rate. Reduced root length. Enhanced sensitivity to methyl methanesulfonate (MMS).</text>
</comment>
<comment type="similarity">
    <text evidence="9">Belongs to the HMGB family.</text>
</comment>
<evidence type="ECO:0000255" key="1">
    <source>
        <dbReference type="PROSITE-ProRule" id="PRU00267"/>
    </source>
</evidence>
<evidence type="ECO:0000256" key="2">
    <source>
        <dbReference type="SAM" id="MobiDB-lite"/>
    </source>
</evidence>
<evidence type="ECO:0000269" key="3">
    <source>
    </source>
</evidence>
<evidence type="ECO:0000269" key="4">
    <source>
    </source>
</evidence>
<evidence type="ECO:0000269" key="5">
    <source>
    </source>
</evidence>
<evidence type="ECO:0000269" key="6">
    <source>
    </source>
</evidence>
<evidence type="ECO:0000269" key="7">
    <source>
    </source>
</evidence>
<evidence type="ECO:0000303" key="8">
    <source>
    </source>
</evidence>
<evidence type="ECO:0000305" key="9"/>
<evidence type="ECO:0007744" key="10">
    <source>
    </source>
</evidence>
<evidence type="ECO:0007744" key="11">
    <source>
    </source>
</evidence>
<evidence type="ECO:0007744" key="12">
    <source>
    </source>
</evidence>
<dbReference type="EMBL" id="Y14071">
    <property type="protein sequence ID" value="CAA74400.1"/>
    <property type="molecule type" value="mRNA"/>
</dbReference>
<dbReference type="EMBL" id="AF049236">
    <property type="protein sequence ID" value="AAC14415.1"/>
    <property type="molecule type" value="Genomic_DNA"/>
</dbReference>
<dbReference type="EMBL" id="CP002686">
    <property type="protein sequence ID" value="AEE78855.1"/>
    <property type="molecule type" value="Genomic_DNA"/>
</dbReference>
<dbReference type="EMBL" id="CP002686">
    <property type="protein sequence ID" value="AEE78856.1"/>
    <property type="molecule type" value="Genomic_DNA"/>
</dbReference>
<dbReference type="EMBL" id="CP002686">
    <property type="protein sequence ID" value="AEE78857.1"/>
    <property type="molecule type" value="Genomic_DNA"/>
</dbReference>
<dbReference type="EMBL" id="CP002686">
    <property type="protein sequence ID" value="ANM65542.1"/>
    <property type="molecule type" value="Genomic_DNA"/>
</dbReference>
<dbReference type="EMBL" id="AY056373">
    <property type="protein sequence ID" value="AAL08229.1"/>
    <property type="molecule type" value="mRNA"/>
</dbReference>
<dbReference type="EMBL" id="AY113172">
    <property type="protein sequence ID" value="AAM47475.1"/>
    <property type="molecule type" value="mRNA"/>
</dbReference>
<dbReference type="EMBL" id="AK316819">
    <property type="protein sequence ID" value="BAH19531.1"/>
    <property type="molecule type" value="mRNA"/>
</dbReference>
<dbReference type="PIR" id="T51159">
    <property type="entry name" value="T51159"/>
</dbReference>
<dbReference type="RefSeq" id="NP_001078269.1">
    <molecule id="O49595-1"/>
    <property type="nucleotide sequence ID" value="NM_001084800.2"/>
</dbReference>
<dbReference type="RefSeq" id="NP_001327501.1">
    <molecule id="O49595-1"/>
    <property type="nucleotide sequence ID" value="NM_001339538.1"/>
</dbReference>
<dbReference type="RefSeq" id="NP_190756.1">
    <molecule id="O49595-1"/>
    <property type="nucleotide sequence ID" value="NM_115047.3"/>
</dbReference>
<dbReference type="RefSeq" id="NP_974413.1">
    <molecule id="O49595-2"/>
    <property type="nucleotide sequence ID" value="NM_202684.3"/>
</dbReference>
<dbReference type="SMR" id="O49595"/>
<dbReference type="BioGRID" id="9669">
    <property type="interactions" value="4"/>
</dbReference>
<dbReference type="FunCoup" id="O49595">
    <property type="interactions" value="1868"/>
</dbReference>
<dbReference type="IntAct" id="O49595">
    <property type="interactions" value="4"/>
</dbReference>
<dbReference type="STRING" id="3702.O49595"/>
<dbReference type="iPTMnet" id="O49595"/>
<dbReference type="PaxDb" id="3702-AT3G51880.2"/>
<dbReference type="ProteomicsDB" id="230339">
    <molecule id="O49595-1"/>
</dbReference>
<dbReference type="EnsemblPlants" id="AT3G51880.1">
    <molecule id="O49595-1"/>
    <property type="protein sequence ID" value="AT3G51880.1"/>
    <property type="gene ID" value="AT3G51880"/>
</dbReference>
<dbReference type="EnsemblPlants" id="AT3G51880.2">
    <molecule id="O49595-2"/>
    <property type="protein sequence ID" value="AT3G51880.2"/>
    <property type="gene ID" value="AT3G51880"/>
</dbReference>
<dbReference type="EnsemblPlants" id="AT3G51880.3">
    <molecule id="O49595-1"/>
    <property type="protein sequence ID" value="AT3G51880.3"/>
    <property type="gene ID" value="AT3G51880"/>
</dbReference>
<dbReference type="EnsemblPlants" id="AT3G51880.5">
    <molecule id="O49595-1"/>
    <property type="protein sequence ID" value="AT3G51880.5"/>
    <property type="gene ID" value="AT3G51880"/>
</dbReference>
<dbReference type="GeneID" id="824351"/>
<dbReference type="Gramene" id="AT3G51880.1">
    <molecule id="O49595-1"/>
    <property type="protein sequence ID" value="AT3G51880.1"/>
    <property type="gene ID" value="AT3G51880"/>
</dbReference>
<dbReference type="Gramene" id="AT3G51880.2">
    <molecule id="O49595-2"/>
    <property type="protein sequence ID" value="AT3G51880.2"/>
    <property type="gene ID" value="AT3G51880"/>
</dbReference>
<dbReference type="Gramene" id="AT3G51880.3">
    <molecule id="O49595-1"/>
    <property type="protein sequence ID" value="AT3G51880.3"/>
    <property type="gene ID" value="AT3G51880"/>
</dbReference>
<dbReference type="Gramene" id="AT3G51880.5">
    <molecule id="O49595-1"/>
    <property type="protein sequence ID" value="AT3G51880.5"/>
    <property type="gene ID" value="AT3G51880"/>
</dbReference>
<dbReference type="KEGG" id="ath:AT3G51880"/>
<dbReference type="Araport" id="AT3G51880"/>
<dbReference type="TAIR" id="AT3G51880">
    <property type="gene designation" value="HMGB1"/>
</dbReference>
<dbReference type="eggNOG" id="KOG0381">
    <property type="taxonomic scope" value="Eukaryota"/>
</dbReference>
<dbReference type="InParanoid" id="O49595"/>
<dbReference type="OMA" id="KRWETIS"/>
<dbReference type="PhylomeDB" id="O49595"/>
<dbReference type="CD-CODE" id="4299E36E">
    <property type="entry name" value="Nucleolus"/>
</dbReference>
<dbReference type="PRO" id="PR:O49595"/>
<dbReference type="Proteomes" id="UP000006548">
    <property type="component" value="Chromosome 3"/>
</dbReference>
<dbReference type="ExpressionAtlas" id="O49595">
    <property type="expression patterns" value="baseline and differential"/>
</dbReference>
<dbReference type="GO" id="GO:0000785">
    <property type="term" value="C:chromatin"/>
    <property type="evidence" value="ECO:0000304"/>
    <property type="project" value="TAIR"/>
</dbReference>
<dbReference type="GO" id="GO:0005634">
    <property type="term" value="C:nucleus"/>
    <property type="evidence" value="ECO:0000314"/>
    <property type="project" value="UniProtKB"/>
</dbReference>
<dbReference type="GO" id="GO:0003682">
    <property type="term" value="F:chromatin binding"/>
    <property type="evidence" value="ECO:0000304"/>
    <property type="project" value="TAIR"/>
</dbReference>
<dbReference type="GO" id="GO:0003677">
    <property type="term" value="F:DNA binding"/>
    <property type="evidence" value="ECO:0000314"/>
    <property type="project" value="TAIR"/>
</dbReference>
<dbReference type="GO" id="GO:0003700">
    <property type="term" value="F:DNA-binding transcription factor activity"/>
    <property type="evidence" value="ECO:0000250"/>
    <property type="project" value="TAIR"/>
</dbReference>
<dbReference type="GO" id="GO:0030527">
    <property type="term" value="F:structural constituent of chromatin"/>
    <property type="evidence" value="ECO:0000304"/>
    <property type="project" value="TAIR"/>
</dbReference>
<dbReference type="GO" id="GO:0006325">
    <property type="term" value="P:chromatin organization"/>
    <property type="evidence" value="ECO:0000304"/>
    <property type="project" value="TAIR"/>
</dbReference>
<dbReference type="CDD" id="cd22005">
    <property type="entry name" value="HMG-box_AtHMGB1-like"/>
    <property type="match status" value="1"/>
</dbReference>
<dbReference type="FunFam" id="1.10.30.10:FF:000044">
    <property type="entry name" value="High mobility group B1"/>
    <property type="match status" value="1"/>
</dbReference>
<dbReference type="Gene3D" id="1.10.30.10">
    <property type="entry name" value="High mobility group box domain"/>
    <property type="match status" value="1"/>
</dbReference>
<dbReference type="InterPro" id="IPR009071">
    <property type="entry name" value="HMG_box_dom"/>
</dbReference>
<dbReference type="InterPro" id="IPR036910">
    <property type="entry name" value="HMG_box_dom_sf"/>
</dbReference>
<dbReference type="InterPro" id="IPR031061">
    <property type="entry name" value="HMGB_plant"/>
</dbReference>
<dbReference type="PANTHER" id="PTHR46261:SF1">
    <property type="entry name" value="HIGH MOBILITY GROUP B PROTEIN 1"/>
    <property type="match status" value="1"/>
</dbReference>
<dbReference type="PANTHER" id="PTHR46261">
    <property type="entry name" value="HIGH MOBILITY GROUP B PROTEIN 4-RELATED"/>
    <property type="match status" value="1"/>
</dbReference>
<dbReference type="Pfam" id="PF00505">
    <property type="entry name" value="HMG_box"/>
    <property type="match status" value="1"/>
</dbReference>
<dbReference type="SMART" id="SM00398">
    <property type="entry name" value="HMG"/>
    <property type="match status" value="1"/>
</dbReference>
<dbReference type="SUPFAM" id="SSF47095">
    <property type="entry name" value="HMG-box"/>
    <property type="match status" value="1"/>
</dbReference>
<dbReference type="PROSITE" id="PS50118">
    <property type="entry name" value="HMG_BOX_2"/>
    <property type="match status" value="1"/>
</dbReference>